<comment type="similarity">
    <text evidence="1">Belongs to the bacterial ribosomal protein bL28 family.</text>
</comment>
<proteinExistence type="inferred from homology"/>
<protein>
    <recommendedName>
        <fullName evidence="1">Large ribosomal subunit protein bL28</fullName>
    </recommendedName>
    <alternativeName>
        <fullName evidence="2">50S ribosomal protein L28</fullName>
    </alternativeName>
</protein>
<name>RL28_RUBXD</name>
<gene>
    <name evidence="1" type="primary">rpmB</name>
    <name type="ordered locus">Rxyl_1368</name>
</gene>
<sequence length="71" mass="7843">MAKVCYSCGKGPSFGNARSHSLRATRRRWNPNLQKVRIREGGATKRVWVCASCLKGFKVQKAVRPVPAAEA</sequence>
<accession>Q1AW97</accession>
<reference key="1">
    <citation type="submission" date="2006-06" db="EMBL/GenBank/DDBJ databases">
        <title>Complete sequence of Rubrobacter xylanophilus DSM 9941.</title>
        <authorList>
            <consortium name="US DOE Joint Genome Institute"/>
            <person name="Copeland A."/>
            <person name="Lucas S."/>
            <person name="Lapidus A."/>
            <person name="Barry K."/>
            <person name="Detter J.C."/>
            <person name="Glavina del Rio T."/>
            <person name="Hammon N."/>
            <person name="Israni S."/>
            <person name="Dalin E."/>
            <person name="Tice H."/>
            <person name="Pitluck S."/>
            <person name="Munk A.C."/>
            <person name="Brettin T."/>
            <person name="Bruce D."/>
            <person name="Han C."/>
            <person name="Tapia R."/>
            <person name="Gilna P."/>
            <person name="Schmutz J."/>
            <person name="Larimer F."/>
            <person name="Land M."/>
            <person name="Hauser L."/>
            <person name="Kyrpides N."/>
            <person name="Lykidis A."/>
            <person name="da Costa M.S."/>
            <person name="Rainey F.A."/>
            <person name="Empadinhas N."/>
            <person name="Jolivet E."/>
            <person name="Battista J.R."/>
            <person name="Richardson P."/>
        </authorList>
    </citation>
    <scope>NUCLEOTIDE SEQUENCE [LARGE SCALE GENOMIC DNA]</scope>
    <source>
        <strain>DSM 9941 / JCM 11954 / NBRC 16129 / PRD-1</strain>
    </source>
</reference>
<evidence type="ECO:0000255" key="1">
    <source>
        <dbReference type="HAMAP-Rule" id="MF_00373"/>
    </source>
</evidence>
<evidence type="ECO:0000305" key="2"/>
<feature type="chain" id="PRO_1000007340" description="Large ribosomal subunit protein bL28">
    <location>
        <begin position="1"/>
        <end position="71"/>
    </location>
</feature>
<keyword id="KW-1185">Reference proteome</keyword>
<keyword id="KW-0687">Ribonucleoprotein</keyword>
<keyword id="KW-0689">Ribosomal protein</keyword>
<dbReference type="EMBL" id="CP000386">
    <property type="protein sequence ID" value="ABG04331.1"/>
    <property type="molecule type" value="Genomic_DNA"/>
</dbReference>
<dbReference type="RefSeq" id="WP_011564348.1">
    <property type="nucleotide sequence ID" value="NC_008148.1"/>
</dbReference>
<dbReference type="SMR" id="Q1AW97"/>
<dbReference type="STRING" id="266117.Rxyl_1368"/>
<dbReference type="KEGG" id="rxy:Rxyl_1368"/>
<dbReference type="eggNOG" id="COG0227">
    <property type="taxonomic scope" value="Bacteria"/>
</dbReference>
<dbReference type="HOGENOM" id="CLU_064548_7_0_11"/>
<dbReference type="OrthoDB" id="9805609at2"/>
<dbReference type="PhylomeDB" id="Q1AW97"/>
<dbReference type="Proteomes" id="UP000006637">
    <property type="component" value="Chromosome"/>
</dbReference>
<dbReference type="GO" id="GO:1990904">
    <property type="term" value="C:ribonucleoprotein complex"/>
    <property type="evidence" value="ECO:0007669"/>
    <property type="project" value="UniProtKB-KW"/>
</dbReference>
<dbReference type="GO" id="GO:0005840">
    <property type="term" value="C:ribosome"/>
    <property type="evidence" value="ECO:0007669"/>
    <property type="project" value="UniProtKB-KW"/>
</dbReference>
<dbReference type="GO" id="GO:0003735">
    <property type="term" value="F:structural constituent of ribosome"/>
    <property type="evidence" value="ECO:0007669"/>
    <property type="project" value="InterPro"/>
</dbReference>
<dbReference type="GO" id="GO:0006412">
    <property type="term" value="P:translation"/>
    <property type="evidence" value="ECO:0007669"/>
    <property type="project" value="UniProtKB-UniRule"/>
</dbReference>
<dbReference type="Gene3D" id="2.30.170.40">
    <property type="entry name" value="Ribosomal protein L28/L24"/>
    <property type="match status" value="1"/>
</dbReference>
<dbReference type="HAMAP" id="MF_00373">
    <property type="entry name" value="Ribosomal_bL28"/>
    <property type="match status" value="1"/>
</dbReference>
<dbReference type="InterPro" id="IPR050096">
    <property type="entry name" value="Bacterial_rp_bL28"/>
</dbReference>
<dbReference type="InterPro" id="IPR026569">
    <property type="entry name" value="Ribosomal_bL28"/>
</dbReference>
<dbReference type="InterPro" id="IPR034704">
    <property type="entry name" value="Ribosomal_bL28/bL31-like_sf"/>
</dbReference>
<dbReference type="InterPro" id="IPR001383">
    <property type="entry name" value="Ribosomal_bL28_bact-type"/>
</dbReference>
<dbReference type="InterPro" id="IPR037147">
    <property type="entry name" value="Ribosomal_bL28_sf"/>
</dbReference>
<dbReference type="NCBIfam" id="TIGR00009">
    <property type="entry name" value="L28"/>
    <property type="match status" value="1"/>
</dbReference>
<dbReference type="PANTHER" id="PTHR39080">
    <property type="entry name" value="50S RIBOSOMAL PROTEIN L28"/>
    <property type="match status" value="1"/>
</dbReference>
<dbReference type="PANTHER" id="PTHR39080:SF1">
    <property type="entry name" value="LARGE RIBOSOMAL SUBUNIT PROTEIN BL28A"/>
    <property type="match status" value="1"/>
</dbReference>
<dbReference type="Pfam" id="PF00830">
    <property type="entry name" value="Ribosomal_L28"/>
    <property type="match status" value="1"/>
</dbReference>
<dbReference type="SUPFAM" id="SSF143800">
    <property type="entry name" value="L28p-like"/>
    <property type="match status" value="1"/>
</dbReference>
<organism>
    <name type="scientific">Rubrobacter xylanophilus (strain DSM 9941 / JCM 11954 / NBRC 16129 / PRD-1)</name>
    <dbReference type="NCBI Taxonomy" id="266117"/>
    <lineage>
        <taxon>Bacteria</taxon>
        <taxon>Bacillati</taxon>
        <taxon>Actinomycetota</taxon>
        <taxon>Rubrobacteria</taxon>
        <taxon>Rubrobacterales</taxon>
        <taxon>Rubrobacteraceae</taxon>
        <taxon>Rubrobacter</taxon>
    </lineage>
</organism>